<keyword id="KW-0472">Membrane</keyword>
<keyword id="KW-1185">Reference proteome</keyword>
<keyword id="KW-0812">Transmembrane</keyword>
<keyword id="KW-1133">Transmembrane helix</keyword>
<proteinExistence type="inferred from homology"/>
<organism>
    <name type="scientific">Acanthamoeba polyphaga mimivirus</name>
    <name type="common">APMV</name>
    <dbReference type="NCBI Taxonomy" id="212035"/>
    <lineage>
        <taxon>Viruses</taxon>
        <taxon>Varidnaviria</taxon>
        <taxon>Bamfordvirae</taxon>
        <taxon>Nucleocytoviricota</taxon>
        <taxon>Megaviricetes</taxon>
        <taxon>Imitervirales</taxon>
        <taxon>Mimiviridae</taxon>
        <taxon>Megamimivirinae</taxon>
        <taxon>Mimivirus</taxon>
        <taxon>Mimivirus bradfordmassiliense</taxon>
    </lineage>
</organism>
<sequence length="200" mass="24046">MLLTIIDKFIQIVLGYLLSDFIMGIYHWIKDTYFSPFTPIIGKTFIWGSRLHHVRPRYVLEFTDKDLIIDSAKWTLSWIGPLFFWFGLTPFLVTMFIMISLNDVIHKYTHEIDHERPMWATILQRIGFFQSHDEHHLHHIAPHEINYCPVTPYVNIWLEKINLWRKLESFVEYLTGVKPRAKEYEFVEDEKYPAGIRFLE</sequence>
<dbReference type="EMBL" id="AY653733">
    <property type="protein sequence ID" value="AAV50891.1"/>
    <property type="molecule type" value="Genomic_DNA"/>
</dbReference>
<dbReference type="KEGG" id="vg:9925272"/>
<dbReference type="OrthoDB" id="11898at10239"/>
<dbReference type="Proteomes" id="UP000001134">
    <property type="component" value="Genome"/>
</dbReference>
<dbReference type="GO" id="GO:0016020">
    <property type="term" value="C:membrane"/>
    <property type="evidence" value="ECO:0007669"/>
    <property type="project" value="UniProtKB-SubCell"/>
</dbReference>
<dbReference type="InterPro" id="IPR053335">
    <property type="entry name" value="Fatty_acid_desaturase_CarF"/>
</dbReference>
<dbReference type="InterPro" id="IPR019547">
    <property type="entry name" value="Lipid_desat"/>
</dbReference>
<dbReference type="PANTHER" id="PTHR48230">
    <property type="match status" value="1"/>
</dbReference>
<dbReference type="PANTHER" id="PTHR48230:SF1">
    <property type="entry name" value="LIPID DESATURASE DOMAIN-CONTAINING PROTEIN"/>
    <property type="match status" value="1"/>
</dbReference>
<dbReference type="Pfam" id="PF10520">
    <property type="entry name" value="Lipid_desat"/>
    <property type="match status" value="1"/>
</dbReference>
<feature type="chain" id="PRO_0000253288" description="Probable fatty acid desaturase MIMI_L630">
    <location>
        <begin position="1"/>
        <end position="200"/>
    </location>
</feature>
<feature type="transmembrane region" description="Helical" evidence="1">
    <location>
        <begin position="9"/>
        <end position="29"/>
    </location>
</feature>
<feature type="transmembrane region" description="Helical" evidence="1">
    <location>
        <begin position="79"/>
        <end position="99"/>
    </location>
</feature>
<name>TM189_MIMIV</name>
<gene>
    <name type="ordered locus">MIMI_L630</name>
</gene>
<reference key="1">
    <citation type="journal article" date="2004" name="Science">
        <title>The 1.2-megabase genome sequence of Mimivirus.</title>
        <authorList>
            <person name="Raoult D."/>
            <person name="Audic S."/>
            <person name="Robert C."/>
            <person name="Abergel C."/>
            <person name="Renesto P."/>
            <person name="Ogata H."/>
            <person name="La Scola B."/>
            <person name="Susan M."/>
            <person name="Claverie J.-M."/>
        </authorList>
    </citation>
    <scope>NUCLEOTIDE SEQUENCE [LARGE SCALE GENOMIC DNA]</scope>
    <source>
        <strain>Rowbotham-Bradford</strain>
    </source>
</reference>
<evidence type="ECO:0000255" key="1"/>
<evidence type="ECO:0000305" key="2"/>
<organismHost>
    <name type="scientific">Acanthamoeba polyphaga</name>
    <name type="common">Amoeba</name>
    <dbReference type="NCBI Taxonomy" id="5757"/>
</organismHost>
<protein>
    <recommendedName>
        <fullName>Probable fatty acid desaturase MIMI_L630</fullName>
    </recommendedName>
</protein>
<comment type="subcellular location">
    <subcellularLocation>
        <location evidence="2">Membrane</location>
        <topology evidence="2">Multi-pass membrane protein</topology>
    </subcellularLocation>
</comment>
<comment type="similarity">
    <text evidence="2">Belongs to the fatty acid desaturase CarF family.</text>
</comment>
<accession>Q5UR78</accession>